<name>GCP4_HUMAN</name>
<keyword id="KW-0002">3D-structure</keyword>
<keyword id="KW-0025">Alternative splicing</keyword>
<keyword id="KW-0963">Cytoplasm</keyword>
<keyword id="KW-0206">Cytoskeleton</keyword>
<keyword id="KW-0903">Direct protein sequencing</keyword>
<keyword id="KW-0991">Intellectual disability</keyword>
<keyword id="KW-0493">Microtubule</keyword>
<keyword id="KW-0905">Primary microcephaly</keyword>
<keyword id="KW-1267">Proteomics identification</keyword>
<keyword id="KW-1185">Reference proteome</keyword>
<dbReference type="EMBL" id="AJ249677">
    <property type="protein sequence ID" value="CAB62539.1"/>
    <property type="molecule type" value="mRNA"/>
</dbReference>
<dbReference type="EMBL" id="AK001639">
    <property type="protein sequence ID" value="BAA91802.1"/>
    <property type="status" value="ALT_INIT"/>
    <property type="molecule type" value="mRNA"/>
</dbReference>
<dbReference type="EMBL" id="AK027703">
    <property type="protein sequence ID" value="BAG51368.1"/>
    <property type="molecule type" value="mRNA"/>
</dbReference>
<dbReference type="EMBL" id="AC018924">
    <property type="status" value="NOT_ANNOTATED_CDS"/>
    <property type="molecule type" value="Genomic_DNA"/>
</dbReference>
<dbReference type="EMBL" id="CH471125">
    <property type="protein sequence ID" value="EAW92603.1"/>
    <property type="molecule type" value="Genomic_DNA"/>
</dbReference>
<dbReference type="EMBL" id="BC009870">
    <property type="protein sequence ID" value="AAH09870.1"/>
    <property type="molecule type" value="mRNA"/>
</dbReference>
<dbReference type="EMBL" id="BC012801">
    <property type="protein sequence ID" value="AAH12801.1"/>
    <property type="molecule type" value="mRNA"/>
</dbReference>
<dbReference type="CCDS" id="CCDS42030.1">
    <molecule id="Q9UGJ1-2"/>
</dbReference>
<dbReference type="CCDS" id="CCDS66745.1">
    <molecule id="Q9UGJ1-1"/>
</dbReference>
<dbReference type="RefSeq" id="NP_001273343.1">
    <molecule id="Q9UGJ1-1"/>
    <property type="nucleotide sequence ID" value="NM_001286414.3"/>
</dbReference>
<dbReference type="RefSeq" id="NP_055259.2">
    <molecule id="Q9UGJ1-2"/>
    <property type="nucleotide sequence ID" value="NM_014444.4"/>
</dbReference>
<dbReference type="RefSeq" id="XP_011519757.1">
    <property type="nucleotide sequence ID" value="XM_011521455.2"/>
</dbReference>
<dbReference type="PDB" id="3RIP">
    <property type="method" value="X-ray"/>
    <property type="resolution" value="2.30 A"/>
    <property type="chains" value="A=1-667"/>
</dbReference>
<dbReference type="PDB" id="6V69">
    <property type="method" value="EM"/>
    <property type="resolution" value="4.20 A"/>
    <property type="chains" value="I=1-667"/>
</dbReference>
<dbReference type="PDB" id="6V6S">
    <property type="method" value="EM"/>
    <property type="resolution" value="4.30 A"/>
    <property type="chains" value="I/K=1-667"/>
</dbReference>
<dbReference type="PDB" id="7AS4">
    <property type="method" value="EM"/>
    <property type="resolution" value="4.13 A"/>
    <property type="chains" value="I/K=1-667"/>
</dbReference>
<dbReference type="PDB" id="7QJ0">
    <property type="method" value="EM"/>
    <property type="resolution" value="5.32 A"/>
    <property type="chains" value="I/K=1-667"/>
</dbReference>
<dbReference type="PDB" id="7QJ1">
    <property type="method" value="EM"/>
    <property type="resolution" value="7.00 A"/>
    <property type="chains" value="I/K=1-667"/>
</dbReference>
<dbReference type="PDB" id="7QJ2">
    <property type="method" value="EM"/>
    <property type="resolution" value="8.60 A"/>
    <property type="chains" value="I/K=1-667"/>
</dbReference>
<dbReference type="PDB" id="7QJ3">
    <property type="method" value="EM"/>
    <property type="resolution" value="7.60 A"/>
    <property type="chains" value="I/K=1-667"/>
</dbReference>
<dbReference type="PDB" id="7QJ4">
    <property type="method" value="EM"/>
    <property type="resolution" value="9.00 A"/>
    <property type="chains" value="I/K=1-667"/>
</dbReference>
<dbReference type="PDB" id="7QJ5">
    <property type="method" value="EM"/>
    <property type="resolution" value="8.70 A"/>
    <property type="chains" value="I/K=1-667"/>
</dbReference>
<dbReference type="PDB" id="7QJ6">
    <property type="method" value="EM"/>
    <property type="resolution" value="7.80 A"/>
    <property type="chains" value="I/K=1-667"/>
</dbReference>
<dbReference type="PDB" id="7QJ7">
    <property type="method" value="EM"/>
    <property type="resolution" value="8.70 A"/>
    <property type="chains" value="I/K=1-667"/>
</dbReference>
<dbReference type="PDB" id="7QJ8">
    <property type="method" value="EM"/>
    <property type="resolution" value="8.70 A"/>
    <property type="chains" value="I/K=1-667"/>
</dbReference>
<dbReference type="PDB" id="7QJ9">
    <property type="method" value="EM"/>
    <property type="resolution" value="8.10 A"/>
    <property type="chains" value="I/K=1-667"/>
</dbReference>
<dbReference type="PDB" id="7QJA">
    <property type="method" value="EM"/>
    <property type="resolution" value="9.20 A"/>
    <property type="chains" value="I/K=1-667"/>
</dbReference>
<dbReference type="PDB" id="7QJB">
    <property type="method" value="EM"/>
    <property type="resolution" value="9.20 A"/>
    <property type="chains" value="I/K=1-667"/>
</dbReference>
<dbReference type="PDB" id="7QJC">
    <property type="method" value="EM"/>
    <property type="resolution" value="16.10 A"/>
    <property type="chains" value="I/K=1-667"/>
</dbReference>
<dbReference type="PDB" id="7QJD">
    <property type="method" value="EM"/>
    <property type="resolution" value="7.10 A"/>
    <property type="chains" value="I/K=1-667"/>
</dbReference>
<dbReference type="PDB" id="7QJE">
    <property type="method" value="EM"/>
    <property type="resolution" value="7.80 A"/>
    <property type="chains" value="I/K=1-667"/>
</dbReference>
<dbReference type="PDB" id="8Q62">
    <property type="method" value="EM"/>
    <property type="resolution" value="3.72 A"/>
    <property type="chains" value="I/K=1-667"/>
</dbReference>
<dbReference type="PDB" id="8RX1">
    <property type="method" value="EM"/>
    <property type="resolution" value="3.57 A"/>
    <property type="chains" value="I/K=1-667"/>
</dbReference>
<dbReference type="PDB" id="8VRD">
    <property type="method" value="EM"/>
    <property type="resolution" value="7.00 A"/>
    <property type="chains" value="I/K=1-667"/>
</dbReference>
<dbReference type="PDB" id="8VRJ">
    <property type="method" value="EM"/>
    <property type="resolution" value="7.70 A"/>
    <property type="chains" value="I/K=1-667"/>
</dbReference>
<dbReference type="PDB" id="8VRK">
    <property type="method" value="EM"/>
    <property type="resolution" value="8.50 A"/>
    <property type="chains" value="I/K=1-667"/>
</dbReference>
<dbReference type="PDBsum" id="3RIP"/>
<dbReference type="PDBsum" id="6V69"/>
<dbReference type="PDBsum" id="6V6S"/>
<dbReference type="PDBsum" id="7AS4"/>
<dbReference type="PDBsum" id="7QJ0"/>
<dbReference type="PDBsum" id="7QJ1"/>
<dbReference type="PDBsum" id="7QJ2"/>
<dbReference type="PDBsum" id="7QJ3"/>
<dbReference type="PDBsum" id="7QJ4"/>
<dbReference type="PDBsum" id="7QJ5"/>
<dbReference type="PDBsum" id="7QJ6"/>
<dbReference type="PDBsum" id="7QJ7"/>
<dbReference type="PDBsum" id="7QJ8"/>
<dbReference type="PDBsum" id="7QJ9"/>
<dbReference type="PDBsum" id="7QJA"/>
<dbReference type="PDBsum" id="7QJB"/>
<dbReference type="PDBsum" id="7QJC"/>
<dbReference type="PDBsum" id="7QJD"/>
<dbReference type="PDBsum" id="7QJE"/>
<dbReference type="PDBsum" id="8Q62"/>
<dbReference type="PDBsum" id="8RX1"/>
<dbReference type="PDBsum" id="8VRD"/>
<dbReference type="PDBsum" id="8VRJ"/>
<dbReference type="PDBsum" id="8VRK"/>
<dbReference type="EMDB" id="EMD-11888"/>
<dbReference type="EMDB" id="EMD-14005"/>
<dbReference type="EMDB" id="EMD-14006"/>
<dbReference type="EMDB" id="EMD-14007"/>
<dbReference type="EMDB" id="EMD-14008"/>
<dbReference type="EMDB" id="EMD-14009"/>
<dbReference type="EMDB" id="EMD-14010"/>
<dbReference type="EMDB" id="EMD-14011"/>
<dbReference type="EMDB" id="EMD-14012"/>
<dbReference type="EMDB" id="EMD-14013"/>
<dbReference type="EMDB" id="EMD-14014"/>
<dbReference type="EMDB" id="EMD-14015"/>
<dbReference type="EMDB" id="EMD-14016"/>
<dbReference type="EMDB" id="EMD-14017"/>
<dbReference type="EMDB" id="EMD-14018"/>
<dbReference type="EMDB" id="EMD-14019"/>
<dbReference type="EMDB" id="EMD-18181"/>
<dbReference type="EMDB" id="EMD-18182"/>
<dbReference type="EMDB" id="EMD-19570"/>
<dbReference type="EMDB" id="EMD-21060"/>
<dbReference type="EMDB" id="EMD-21073"/>
<dbReference type="EMDB" id="EMD-43481"/>
<dbReference type="EMDB" id="EMD-43482"/>
<dbReference type="EMDB" id="EMD-43483"/>
<dbReference type="SMR" id="Q9UGJ1"/>
<dbReference type="BioGRID" id="118078">
    <property type="interactions" value="183"/>
</dbReference>
<dbReference type="CORUM" id="Q9UGJ1"/>
<dbReference type="DIP" id="DIP-50536N"/>
<dbReference type="FunCoup" id="Q9UGJ1">
    <property type="interactions" value="2544"/>
</dbReference>
<dbReference type="IntAct" id="Q9UGJ1">
    <property type="interactions" value="117"/>
</dbReference>
<dbReference type="MINT" id="Q9UGJ1"/>
<dbReference type="STRING" id="9606.ENSP00000260383"/>
<dbReference type="GlyGen" id="Q9UGJ1">
    <property type="glycosylation" value="3 sites, 8 N-linked glycans (2 sites), 1 O-linked glycan (1 site)"/>
</dbReference>
<dbReference type="iPTMnet" id="Q9UGJ1"/>
<dbReference type="MetOSite" id="Q9UGJ1"/>
<dbReference type="PhosphoSitePlus" id="Q9UGJ1"/>
<dbReference type="BioMuta" id="TUBGCP4"/>
<dbReference type="DMDM" id="22095730"/>
<dbReference type="jPOST" id="Q9UGJ1"/>
<dbReference type="MassIVE" id="Q9UGJ1"/>
<dbReference type="PaxDb" id="9606-ENSP00000260383"/>
<dbReference type="PeptideAtlas" id="Q9UGJ1"/>
<dbReference type="ProteomicsDB" id="84225">
    <molecule id="Q9UGJ1-1"/>
</dbReference>
<dbReference type="ProteomicsDB" id="84226">
    <molecule id="Q9UGJ1-2"/>
</dbReference>
<dbReference type="Pumba" id="Q9UGJ1"/>
<dbReference type="Antibodypedia" id="23879">
    <property type="antibodies" value="218 antibodies from 28 providers"/>
</dbReference>
<dbReference type="DNASU" id="27229"/>
<dbReference type="Ensembl" id="ENST00000260383.11">
    <molecule id="Q9UGJ1-1"/>
    <property type="protein sequence ID" value="ENSP00000260383.7"/>
    <property type="gene ID" value="ENSG00000137822.13"/>
</dbReference>
<dbReference type="Ensembl" id="ENST00000564079.6">
    <molecule id="Q9UGJ1-2"/>
    <property type="protein sequence ID" value="ENSP00000456648.2"/>
    <property type="gene ID" value="ENSG00000137822.13"/>
</dbReference>
<dbReference type="GeneID" id="27229"/>
<dbReference type="KEGG" id="hsa:27229"/>
<dbReference type="MANE-Select" id="ENST00000564079.6">
    <molecule id="Q9UGJ1-2"/>
    <property type="protein sequence ID" value="ENSP00000456648.2"/>
    <property type="RefSeq nucleotide sequence ID" value="NM_014444.5"/>
    <property type="RefSeq protein sequence ID" value="NP_055259.2"/>
</dbReference>
<dbReference type="UCSC" id="uc001zrn.5">
    <molecule id="Q9UGJ1-1"/>
    <property type="organism name" value="human"/>
</dbReference>
<dbReference type="AGR" id="HGNC:16691"/>
<dbReference type="CTD" id="27229"/>
<dbReference type="DisGeNET" id="27229"/>
<dbReference type="GeneCards" id="TUBGCP4"/>
<dbReference type="HGNC" id="HGNC:16691">
    <property type="gene designation" value="TUBGCP4"/>
</dbReference>
<dbReference type="HPA" id="ENSG00000137822">
    <property type="expression patterns" value="Low tissue specificity"/>
</dbReference>
<dbReference type="MalaCards" id="TUBGCP4"/>
<dbReference type="MIM" id="609610">
    <property type="type" value="gene"/>
</dbReference>
<dbReference type="MIM" id="616335">
    <property type="type" value="phenotype"/>
</dbReference>
<dbReference type="neXtProt" id="NX_Q9UGJ1"/>
<dbReference type="OpenTargets" id="ENSG00000137822"/>
<dbReference type="Orphanet" id="2518">
    <property type="disease" value="Autosomal recessive chorioretinopathy-microcephaly syndrome"/>
</dbReference>
<dbReference type="PharmGKB" id="PA162407404"/>
<dbReference type="VEuPathDB" id="HostDB:ENSG00000137822"/>
<dbReference type="eggNOG" id="KOG2065">
    <property type="taxonomic scope" value="Eukaryota"/>
</dbReference>
<dbReference type="GeneTree" id="ENSGT00940000156677"/>
<dbReference type="HOGENOM" id="CLU_012029_0_0_1"/>
<dbReference type="InParanoid" id="Q9UGJ1"/>
<dbReference type="OMA" id="QLSMWLL"/>
<dbReference type="OrthoDB" id="78652at2759"/>
<dbReference type="PAN-GO" id="Q9UGJ1">
    <property type="GO annotations" value="10 GO annotations based on evolutionary models"/>
</dbReference>
<dbReference type="PhylomeDB" id="Q9UGJ1"/>
<dbReference type="TreeFam" id="TF324188"/>
<dbReference type="PathwayCommons" id="Q9UGJ1"/>
<dbReference type="Reactome" id="R-HSA-380270">
    <property type="pathway name" value="Recruitment of mitotic centrosome proteins and complexes"/>
</dbReference>
<dbReference type="Reactome" id="R-HSA-380320">
    <property type="pathway name" value="Recruitment of NuMA to mitotic centrosomes"/>
</dbReference>
<dbReference type="SignaLink" id="Q9UGJ1"/>
<dbReference type="SIGNOR" id="Q9UGJ1"/>
<dbReference type="BioGRID-ORCS" id="27229">
    <property type="hits" value="813 hits in 1166 CRISPR screens"/>
</dbReference>
<dbReference type="CD-CODE" id="8C2F96ED">
    <property type="entry name" value="Centrosome"/>
</dbReference>
<dbReference type="ChiTaRS" id="TUBGCP4">
    <property type="organism name" value="human"/>
</dbReference>
<dbReference type="EvolutionaryTrace" id="Q9UGJ1"/>
<dbReference type="GeneWiki" id="TUBGCP4"/>
<dbReference type="GenomeRNAi" id="27229"/>
<dbReference type="Pharos" id="Q9UGJ1">
    <property type="development level" value="Tbio"/>
</dbReference>
<dbReference type="PRO" id="PR:Q9UGJ1"/>
<dbReference type="Proteomes" id="UP000005640">
    <property type="component" value="Chromosome 15"/>
</dbReference>
<dbReference type="RNAct" id="Q9UGJ1">
    <property type="molecule type" value="protein"/>
</dbReference>
<dbReference type="Bgee" id="ENSG00000137822">
    <property type="expression patterns" value="Expressed in sperm and 175 other cell types or tissues"/>
</dbReference>
<dbReference type="ExpressionAtlas" id="Q9UGJ1">
    <property type="expression patterns" value="baseline and differential"/>
</dbReference>
<dbReference type="GO" id="GO:0005813">
    <property type="term" value="C:centrosome"/>
    <property type="evidence" value="ECO:0000314"/>
    <property type="project" value="HPA"/>
</dbReference>
<dbReference type="GO" id="GO:0005829">
    <property type="term" value="C:cytosol"/>
    <property type="evidence" value="ECO:0000304"/>
    <property type="project" value="Reactome"/>
</dbReference>
<dbReference type="GO" id="GO:0000930">
    <property type="term" value="C:gamma-tubulin complex"/>
    <property type="evidence" value="ECO:0000318"/>
    <property type="project" value="GO_Central"/>
</dbReference>
<dbReference type="GO" id="GO:0000931">
    <property type="term" value="C:gamma-tubulin ring complex"/>
    <property type="evidence" value="ECO:0000303"/>
    <property type="project" value="UniProtKB"/>
</dbReference>
<dbReference type="GO" id="GO:0016020">
    <property type="term" value="C:membrane"/>
    <property type="evidence" value="ECO:0007005"/>
    <property type="project" value="UniProtKB"/>
</dbReference>
<dbReference type="GO" id="GO:0005874">
    <property type="term" value="C:microtubule"/>
    <property type="evidence" value="ECO:0007669"/>
    <property type="project" value="UniProtKB-KW"/>
</dbReference>
<dbReference type="GO" id="GO:0015630">
    <property type="term" value="C:microtubule cytoskeleton"/>
    <property type="evidence" value="ECO:0000304"/>
    <property type="project" value="ProtInc"/>
</dbReference>
<dbReference type="GO" id="GO:0055037">
    <property type="term" value="C:recycling endosome"/>
    <property type="evidence" value="ECO:0000314"/>
    <property type="project" value="UniProtKB"/>
</dbReference>
<dbReference type="GO" id="GO:0000922">
    <property type="term" value="C:spindle pole"/>
    <property type="evidence" value="ECO:0007669"/>
    <property type="project" value="InterPro"/>
</dbReference>
<dbReference type="GO" id="GO:0043015">
    <property type="term" value="F:gamma-tubulin binding"/>
    <property type="evidence" value="ECO:0000318"/>
    <property type="project" value="GO_Central"/>
</dbReference>
<dbReference type="GO" id="GO:0005200">
    <property type="term" value="F:structural constituent of cytoskeleton"/>
    <property type="evidence" value="ECO:0000303"/>
    <property type="project" value="UniProtKB"/>
</dbReference>
<dbReference type="GO" id="GO:0031122">
    <property type="term" value="P:cytoplasmic microtubule organization"/>
    <property type="evidence" value="ECO:0000318"/>
    <property type="project" value="GO_Central"/>
</dbReference>
<dbReference type="GO" id="GO:0051321">
    <property type="term" value="P:meiotic cell cycle"/>
    <property type="evidence" value="ECO:0000318"/>
    <property type="project" value="GO_Central"/>
</dbReference>
<dbReference type="GO" id="GO:0007020">
    <property type="term" value="P:microtubule nucleation"/>
    <property type="evidence" value="ECO:0000318"/>
    <property type="project" value="GO_Central"/>
</dbReference>
<dbReference type="GO" id="GO:0000278">
    <property type="term" value="P:mitotic cell cycle"/>
    <property type="evidence" value="ECO:0000318"/>
    <property type="project" value="GO_Central"/>
</dbReference>
<dbReference type="GO" id="GO:0065003">
    <property type="term" value="P:protein-containing complex assembly"/>
    <property type="evidence" value="ECO:0000303"/>
    <property type="project" value="ProtInc"/>
</dbReference>
<dbReference type="GO" id="GO:0051225">
    <property type="term" value="P:spindle assembly"/>
    <property type="evidence" value="ECO:0000318"/>
    <property type="project" value="GO_Central"/>
</dbReference>
<dbReference type="FunFam" id="1.20.120.1900:FF:000001">
    <property type="entry name" value="Gamma-tubulin complex component"/>
    <property type="match status" value="1"/>
</dbReference>
<dbReference type="Gene3D" id="1.20.120.1900">
    <property type="entry name" value="Gamma-tubulin complex, C-terminal domain"/>
    <property type="match status" value="1"/>
</dbReference>
<dbReference type="InterPro" id="IPR007259">
    <property type="entry name" value="GCP"/>
</dbReference>
<dbReference type="InterPro" id="IPR040457">
    <property type="entry name" value="GCP_C"/>
</dbReference>
<dbReference type="InterPro" id="IPR042241">
    <property type="entry name" value="GCP_C_sf"/>
</dbReference>
<dbReference type="InterPro" id="IPR041470">
    <property type="entry name" value="GCP_N"/>
</dbReference>
<dbReference type="PANTHER" id="PTHR19302">
    <property type="entry name" value="GAMMA TUBULIN COMPLEX PROTEIN"/>
    <property type="match status" value="1"/>
</dbReference>
<dbReference type="PANTHER" id="PTHR19302:SF27">
    <property type="entry name" value="GAMMA-TUBULIN COMPLEX COMPONENT 4"/>
    <property type="match status" value="1"/>
</dbReference>
<dbReference type="Pfam" id="PF04130">
    <property type="entry name" value="GCP_C_terminal"/>
    <property type="match status" value="1"/>
</dbReference>
<dbReference type="Pfam" id="PF17681">
    <property type="entry name" value="GCP_N_terminal"/>
    <property type="match status" value="1"/>
</dbReference>
<organism>
    <name type="scientific">Homo sapiens</name>
    <name type="common">Human</name>
    <dbReference type="NCBI Taxonomy" id="9606"/>
    <lineage>
        <taxon>Eukaryota</taxon>
        <taxon>Metazoa</taxon>
        <taxon>Chordata</taxon>
        <taxon>Craniata</taxon>
        <taxon>Vertebrata</taxon>
        <taxon>Euteleostomi</taxon>
        <taxon>Mammalia</taxon>
        <taxon>Eutheria</taxon>
        <taxon>Euarchontoglires</taxon>
        <taxon>Primates</taxon>
        <taxon>Haplorrhini</taxon>
        <taxon>Catarrhini</taxon>
        <taxon>Hominidae</taxon>
        <taxon>Homo</taxon>
    </lineage>
</organism>
<evidence type="ECO:0000256" key="1">
    <source>
        <dbReference type="SAM" id="MobiDB-lite"/>
    </source>
</evidence>
<evidence type="ECO:0000269" key="2">
    <source>
    </source>
</evidence>
<evidence type="ECO:0000269" key="3">
    <source>
    </source>
</evidence>
<evidence type="ECO:0000269" key="4">
    <source>
    </source>
</evidence>
<evidence type="ECO:0000269" key="5">
    <source>
    </source>
</evidence>
<evidence type="ECO:0000269" key="6">
    <source>
    </source>
</evidence>
<evidence type="ECO:0000269" key="7">
    <source>
    </source>
</evidence>
<evidence type="ECO:0000303" key="8">
    <source>
    </source>
</evidence>
<evidence type="ECO:0000305" key="9"/>
<evidence type="ECO:0007744" key="10">
    <source>
        <dbReference type="PDB" id="8Q62"/>
    </source>
</evidence>
<evidence type="ECO:0007744" key="11">
    <source>
        <dbReference type="PDB" id="8RX1"/>
    </source>
</evidence>
<evidence type="ECO:0007744" key="12">
    <source>
        <dbReference type="PDB" id="8VRD"/>
    </source>
</evidence>
<evidence type="ECO:0007744" key="13">
    <source>
        <dbReference type="PDB" id="8VRJ"/>
    </source>
</evidence>
<evidence type="ECO:0007744" key="14">
    <source>
        <dbReference type="PDB" id="8VRK"/>
    </source>
</evidence>
<evidence type="ECO:0007829" key="15">
    <source>
        <dbReference type="PDB" id="3RIP"/>
    </source>
</evidence>
<reference key="1">
    <citation type="journal article" date="1999" name="J. Cell Biol.">
        <title>Human 76p: a new protein member of the gamma-tubulin associated protein family.</title>
        <authorList>
            <person name="Fava F."/>
            <person name="Raynaud-Messina B."/>
            <person name="Leung-Tack J."/>
            <person name="Mazzolini L."/>
            <person name="Li M."/>
            <person name="Guillemot J.-C."/>
            <person name="Cachot D."/>
            <person name="Tollon Y."/>
            <person name="Ferrara P."/>
            <person name="Wright M."/>
        </authorList>
    </citation>
    <scope>NUCLEOTIDE SEQUENCE [MRNA] (ISOFORM 1)</scope>
    <scope>PROTEIN SEQUENCE OF 1-20</scope>
    <source>
        <tissue>Neuroblastoma</tissue>
    </source>
</reference>
<reference key="2">
    <citation type="journal article" date="2004" name="Nat. Genet.">
        <title>Complete sequencing and characterization of 21,243 full-length human cDNAs.</title>
        <authorList>
            <person name="Ota T."/>
            <person name="Suzuki Y."/>
            <person name="Nishikawa T."/>
            <person name="Otsuki T."/>
            <person name="Sugiyama T."/>
            <person name="Irie R."/>
            <person name="Wakamatsu A."/>
            <person name="Hayashi K."/>
            <person name="Sato H."/>
            <person name="Nagai K."/>
            <person name="Kimura K."/>
            <person name="Makita H."/>
            <person name="Sekine M."/>
            <person name="Obayashi M."/>
            <person name="Nishi T."/>
            <person name="Shibahara T."/>
            <person name="Tanaka T."/>
            <person name="Ishii S."/>
            <person name="Yamamoto J."/>
            <person name="Saito K."/>
            <person name="Kawai Y."/>
            <person name="Isono Y."/>
            <person name="Nakamura Y."/>
            <person name="Nagahari K."/>
            <person name="Murakami K."/>
            <person name="Yasuda T."/>
            <person name="Iwayanagi T."/>
            <person name="Wagatsuma M."/>
            <person name="Shiratori A."/>
            <person name="Sudo H."/>
            <person name="Hosoiri T."/>
            <person name="Kaku Y."/>
            <person name="Kodaira H."/>
            <person name="Kondo H."/>
            <person name="Sugawara M."/>
            <person name="Takahashi M."/>
            <person name="Kanda K."/>
            <person name="Yokoi T."/>
            <person name="Furuya T."/>
            <person name="Kikkawa E."/>
            <person name="Omura Y."/>
            <person name="Abe K."/>
            <person name="Kamihara K."/>
            <person name="Katsuta N."/>
            <person name="Sato K."/>
            <person name="Tanikawa M."/>
            <person name="Yamazaki M."/>
            <person name="Ninomiya K."/>
            <person name="Ishibashi T."/>
            <person name="Yamashita H."/>
            <person name="Murakawa K."/>
            <person name="Fujimori K."/>
            <person name="Tanai H."/>
            <person name="Kimata M."/>
            <person name="Watanabe M."/>
            <person name="Hiraoka S."/>
            <person name="Chiba Y."/>
            <person name="Ishida S."/>
            <person name="Ono Y."/>
            <person name="Takiguchi S."/>
            <person name="Watanabe S."/>
            <person name="Yosida M."/>
            <person name="Hotuta T."/>
            <person name="Kusano J."/>
            <person name="Kanehori K."/>
            <person name="Takahashi-Fujii A."/>
            <person name="Hara H."/>
            <person name="Tanase T.-O."/>
            <person name="Nomura Y."/>
            <person name="Togiya S."/>
            <person name="Komai F."/>
            <person name="Hara R."/>
            <person name="Takeuchi K."/>
            <person name="Arita M."/>
            <person name="Imose N."/>
            <person name="Musashino K."/>
            <person name="Yuuki H."/>
            <person name="Oshima A."/>
            <person name="Sasaki N."/>
            <person name="Aotsuka S."/>
            <person name="Yoshikawa Y."/>
            <person name="Matsunawa H."/>
            <person name="Ichihara T."/>
            <person name="Shiohata N."/>
            <person name="Sano S."/>
            <person name="Moriya S."/>
            <person name="Momiyama H."/>
            <person name="Satoh N."/>
            <person name="Takami S."/>
            <person name="Terashima Y."/>
            <person name="Suzuki O."/>
            <person name="Nakagawa S."/>
            <person name="Senoh A."/>
            <person name="Mizoguchi H."/>
            <person name="Goto Y."/>
            <person name="Shimizu F."/>
            <person name="Wakebe H."/>
            <person name="Hishigaki H."/>
            <person name="Watanabe T."/>
            <person name="Sugiyama A."/>
            <person name="Takemoto M."/>
            <person name="Kawakami B."/>
            <person name="Yamazaki M."/>
            <person name="Watanabe K."/>
            <person name="Kumagai A."/>
            <person name="Itakura S."/>
            <person name="Fukuzumi Y."/>
            <person name="Fujimori Y."/>
            <person name="Komiyama M."/>
            <person name="Tashiro H."/>
            <person name="Tanigami A."/>
            <person name="Fujiwara T."/>
            <person name="Ono T."/>
            <person name="Yamada K."/>
            <person name="Fujii Y."/>
            <person name="Ozaki K."/>
            <person name="Hirao M."/>
            <person name="Ohmori Y."/>
            <person name="Kawabata A."/>
            <person name="Hikiji T."/>
            <person name="Kobatake N."/>
            <person name="Inagaki H."/>
            <person name="Ikema Y."/>
            <person name="Okamoto S."/>
            <person name="Okitani R."/>
            <person name="Kawakami T."/>
            <person name="Noguchi S."/>
            <person name="Itoh T."/>
            <person name="Shigeta K."/>
            <person name="Senba T."/>
            <person name="Matsumura K."/>
            <person name="Nakajima Y."/>
            <person name="Mizuno T."/>
            <person name="Morinaga M."/>
            <person name="Sasaki M."/>
            <person name="Togashi T."/>
            <person name="Oyama M."/>
            <person name="Hata H."/>
            <person name="Watanabe M."/>
            <person name="Komatsu T."/>
            <person name="Mizushima-Sugano J."/>
            <person name="Satoh T."/>
            <person name="Shirai Y."/>
            <person name="Takahashi Y."/>
            <person name="Nakagawa K."/>
            <person name="Okumura K."/>
            <person name="Nagase T."/>
            <person name="Nomura N."/>
            <person name="Kikuchi H."/>
            <person name="Masuho Y."/>
            <person name="Yamashita R."/>
            <person name="Nakai K."/>
            <person name="Yada T."/>
            <person name="Nakamura Y."/>
            <person name="Ohara O."/>
            <person name="Isogai T."/>
            <person name="Sugano S."/>
        </authorList>
    </citation>
    <scope>NUCLEOTIDE SEQUENCE [LARGE SCALE MRNA] (ISOFORM 1)</scope>
    <source>
        <tissue>Teratocarcinoma</tissue>
    </source>
</reference>
<reference key="3">
    <citation type="journal article" date="2006" name="Nature">
        <title>Analysis of the DNA sequence and duplication history of human chromosome 15.</title>
        <authorList>
            <person name="Zody M.C."/>
            <person name="Garber M."/>
            <person name="Sharpe T."/>
            <person name="Young S.K."/>
            <person name="Rowen L."/>
            <person name="O'Neill K."/>
            <person name="Whittaker C.A."/>
            <person name="Kamal M."/>
            <person name="Chang J.L."/>
            <person name="Cuomo C.A."/>
            <person name="Dewar K."/>
            <person name="FitzGerald M.G."/>
            <person name="Kodira C.D."/>
            <person name="Madan A."/>
            <person name="Qin S."/>
            <person name="Yang X."/>
            <person name="Abbasi N."/>
            <person name="Abouelleil A."/>
            <person name="Arachchi H.M."/>
            <person name="Baradarani L."/>
            <person name="Birditt B."/>
            <person name="Bloom S."/>
            <person name="Bloom T."/>
            <person name="Borowsky M.L."/>
            <person name="Burke J."/>
            <person name="Butler J."/>
            <person name="Cook A."/>
            <person name="DeArellano K."/>
            <person name="DeCaprio D."/>
            <person name="Dorris L. III"/>
            <person name="Dors M."/>
            <person name="Eichler E.E."/>
            <person name="Engels R."/>
            <person name="Fahey J."/>
            <person name="Fleetwood P."/>
            <person name="Friedman C."/>
            <person name="Gearin G."/>
            <person name="Hall J.L."/>
            <person name="Hensley G."/>
            <person name="Johnson E."/>
            <person name="Jones C."/>
            <person name="Kamat A."/>
            <person name="Kaur A."/>
            <person name="Locke D.P."/>
            <person name="Madan A."/>
            <person name="Munson G."/>
            <person name="Jaffe D.B."/>
            <person name="Lui A."/>
            <person name="Macdonald P."/>
            <person name="Mauceli E."/>
            <person name="Naylor J.W."/>
            <person name="Nesbitt R."/>
            <person name="Nicol R."/>
            <person name="O'Leary S.B."/>
            <person name="Ratcliffe A."/>
            <person name="Rounsley S."/>
            <person name="She X."/>
            <person name="Sneddon K.M.B."/>
            <person name="Stewart S."/>
            <person name="Sougnez C."/>
            <person name="Stone S.M."/>
            <person name="Topham K."/>
            <person name="Vincent D."/>
            <person name="Wang S."/>
            <person name="Zimmer A.R."/>
            <person name="Birren B.W."/>
            <person name="Hood L."/>
            <person name="Lander E.S."/>
            <person name="Nusbaum C."/>
        </authorList>
    </citation>
    <scope>NUCLEOTIDE SEQUENCE [LARGE SCALE GENOMIC DNA]</scope>
</reference>
<reference key="4">
    <citation type="submission" date="2005-07" db="EMBL/GenBank/DDBJ databases">
        <authorList>
            <person name="Mural R.J."/>
            <person name="Istrail S."/>
            <person name="Sutton G.G."/>
            <person name="Florea L."/>
            <person name="Halpern A.L."/>
            <person name="Mobarry C.M."/>
            <person name="Lippert R."/>
            <person name="Walenz B."/>
            <person name="Shatkay H."/>
            <person name="Dew I."/>
            <person name="Miller J.R."/>
            <person name="Flanigan M.J."/>
            <person name="Edwards N.J."/>
            <person name="Bolanos R."/>
            <person name="Fasulo D."/>
            <person name="Halldorsson B.V."/>
            <person name="Hannenhalli S."/>
            <person name="Turner R."/>
            <person name="Yooseph S."/>
            <person name="Lu F."/>
            <person name="Nusskern D.R."/>
            <person name="Shue B.C."/>
            <person name="Zheng X.H."/>
            <person name="Zhong F."/>
            <person name="Delcher A.L."/>
            <person name="Huson D.H."/>
            <person name="Kravitz S.A."/>
            <person name="Mouchard L."/>
            <person name="Reinert K."/>
            <person name="Remington K.A."/>
            <person name="Clark A.G."/>
            <person name="Waterman M.S."/>
            <person name="Eichler E.E."/>
            <person name="Adams M.D."/>
            <person name="Hunkapiller M.W."/>
            <person name="Myers E.W."/>
            <person name="Venter J.C."/>
        </authorList>
    </citation>
    <scope>NUCLEOTIDE SEQUENCE [LARGE SCALE GENOMIC DNA]</scope>
</reference>
<reference key="5">
    <citation type="journal article" date="2004" name="Genome Res.">
        <title>The status, quality, and expansion of the NIH full-length cDNA project: the Mammalian Gene Collection (MGC).</title>
        <authorList>
            <consortium name="The MGC Project Team"/>
        </authorList>
    </citation>
    <scope>NUCLEOTIDE SEQUENCE [LARGE SCALE MRNA] (ISOFORM 2)</scope>
    <source>
        <tissue>Lung</tissue>
    </source>
</reference>
<reference key="6">
    <citation type="journal article" date="2003" name="Dev. Cell">
        <title>Polo-like kinase 1 regulates Nlp, a centrosome protein involved in microtubule nucleation.</title>
        <authorList>
            <person name="Casenghi M."/>
            <person name="Meraldi P."/>
            <person name="Weinhart U."/>
            <person name="Duncan P.I."/>
            <person name="Korner R."/>
            <person name="Nigg E.A."/>
        </authorList>
    </citation>
    <scope>INTERACTION WITH NINL</scope>
</reference>
<reference key="7">
    <citation type="journal article" date="2011" name="BMC Syst. Biol.">
        <title>Initial characterization of the human central proteome.</title>
        <authorList>
            <person name="Burkard T.R."/>
            <person name="Planyavsky M."/>
            <person name="Kaupe I."/>
            <person name="Breitwieser F.P."/>
            <person name="Buerckstuemmer T."/>
            <person name="Bennett K.L."/>
            <person name="Superti-Furga G."/>
            <person name="Colinge J."/>
        </authorList>
    </citation>
    <scope>IDENTIFICATION BY MASS SPECTROMETRY [LARGE SCALE ANALYSIS]</scope>
</reference>
<reference key="8">
    <citation type="journal article" date="2015" name="Am. J. Hum. Genet.">
        <title>Mutations in TUBGCP4 alter microtubule organization via the gamma-tubulin ring complex in autosomal-recessive microcephaly with chorioretinopathy.</title>
        <authorList>
            <person name="Scheidecker S."/>
            <person name="Etard C."/>
            <person name="Haren L."/>
            <person name="Stoetzel C."/>
            <person name="Hull S."/>
            <person name="Arno G."/>
            <person name="Plagnol V."/>
            <person name="Drunat S."/>
            <person name="Passemard S."/>
            <person name="Toutain A."/>
            <person name="Obringer C."/>
            <person name="Koob M."/>
            <person name="Geoffroy V."/>
            <person name="Marion V."/>
            <person name="Strahle U."/>
            <person name="Ostergaard P."/>
            <person name="Verloes A."/>
            <person name="Merdes A."/>
            <person name="Moore A.T."/>
            <person name="Dollfus H."/>
        </authorList>
    </citation>
    <scope>INVOLVEMENT IN MCCRP3</scope>
</reference>
<reference key="9">
    <citation type="journal article" date="2015" name="Cell">
        <title>ATF5 Connects the Pericentriolar Materials to the Proximal End of the Mother Centriole.</title>
        <authorList>
            <person name="Madarampalli B."/>
            <person name="Yuan Y."/>
            <person name="Liu D."/>
            <person name="Lengel K."/>
            <person name="Xu Y."/>
            <person name="Li G."/>
            <person name="Yang J."/>
            <person name="Liu X."/>
            <person name="Lu Z."/>
            <person name="Liu D.X."/>
        </authorList>
    </citation>
    <scope>INTERACTION WITH ATF5</scope>
</reference>
<reference evidence="11" key="10">
    <citation type="journal article" date="2024" name="Dev. Cell">
        <title>CDK5RAP2 activates microtubule nucleator gammaTuRC by facilitating template formation and actin release.</title>
        <authorList>
            <person name="Serna M."/>
            <person name="Zimmermann F."/>
            <person name="Vineethakumari C."/>
            <person name="Gonzalez-Rodriguez N."/>
            <person name="Llorca O."/>
            <person name="Luders J."/>
        </authorList>
    </citation>
    <scope>STRUCTURE BY ELECTRON MICROSCOPY (3.57 ANGSTROMS) OF THE GAMMA-TUBULIN RING COMPLEX IN COMPLEX WITH MZT1; MZT2A; CDK5RAP2 AND ACTB</scope>
    <scope>FUNCTION</scope>
    <scope>SUBUNIT</scope>
</reference>
<reference evidence="12 13 14" key="11">
    <citation type="journal article" date="2024" name="Nat. Struct. Mol. Biol.">
        <title>Structure of the gamma-tubulin ring complex-capped microtubule.</title>
        <authorList>
            <person name="Aher A."/>
            <person name="Urnavicius L."/>
            <person name="Xue A."/>
            <person name="Neselu K."/>
            <person name="Kapoor T.M."/>
        </authorList>
    </citation>
    <scope>STRUCTURE BY ELECTRON MICROSCOPY (7.00 ANGSTROMS) OF THE GAMMA-TUBULIN RING COMPLEX IN COMPLEX WITH MZT1; ACTB; TUBA1B AND TUBB3</scope>
    <scope>FUNCTION</scope>
    <scope>SUBUNIT</scope>
</reference>
<reference evidence="10" key="12">
    <citation type="journal article" date="2024" name="Science">
        <title>Transition of human gamma-tubulin ring complex into a closed conformation during microtubule nucleation.</title>
        <authorList>
            <person name="Brito C."/>
            <person name="Serna M."/>
            <person name="Guerra P."/>
            <person name="Llorca O."/>
            <person name="Surrey T."/>
        </authorList>
    </citation>
    <scope>STRUCTURE BY ELECTRON MICROSCOPY (3.72 ANGSTROMS) OF THE GAMMA-TUBULIN RING COMPLEX</scope>
    <scope>FUNCTION</scope>
    <scope>SUBUNIT</scope>
</reference>
<sequence>MIHELLLALSGYPGSIFTWNKRSGLQVSQDFPFLHPSETSVLNRLCRLGTDYIRFTEFIEQYTGHVQQQDHHPSQQGQGGLHGIYLRAFCTGLDSVLQPYRQALLDLEQEFLGDPHLSISHVNYFLDQFQLLFPSVMVVVEQIKSQKIHGCQILETVYKHSCGGLPPVRSALEKILAVCHGVMYKQLSAWMLHGLLLDQHEEFFIKQGPSSGNVSAQPEEDEEDLGIGGLTGKQLRELQDLRLIEEENMLAPSLKQFSLRVEILPSYIPVRVAEKILFVGESVQMFENQNVNLTRKGSILKNQEDTFAAELHRLKQQPLFSLVDFEQVVDRIRSTVAEHLWKLMVEESDLLGQLKIIKDFYLLGRGELFQAFIDTAQHMLKTPPTAVTEHDVNVAFQQSAHKVLLDDDNLLPLLHLTIEYHGKEHKADATQAREGPSRETSPREAPASGWAALGLSYKVQWPLHILFTPAVLEKYNVVFKYLLSVRRVQAELQHCWALQMQRKHLKSNQTDAIKWRLRNHMAFLVDNLQYYLQVDVLESQFSQLLHQINSTRDFESIRLAHDHFLSNLLAQSFILLKPVFHCLNEILDLCHSFCSLVSQNLGPLDERGAAQLSILVKGFSRQSSLLFKILSSVRNHQINSDLAQLLLRLDYNKYYTQAGGTLGSFGM</sequence>
<feature type="chain" id="PRO_0000078124" description="Gamma-tubulin complex component 4">
    <location>
        <begin position="1"/>
        <end position="667"/>
    </location>
</feature>
<feature type="region of interest" description="Disordered" evidence="1">
    <location>
        <begin position="425"/>
        <end position="445"/>
    </location>
</feature>
<feature type="splice variant" id="VSP_040085" description="In isoform 2." evidence="8">
    <location>
        <position position="427"/>
    </location>
</feature>
<feature type="helix" evidence="15">
    <location>
        <begin position="2"/>
        <end position="9"/>
    </location>
</feature>
<feature type="strand" evidence="15">
    <location>
        <begin position="15"/>
        <end position="20"/>
    </location>
</feature>
<feature type="turn" evidence="15">
    <location>
        <begin position="21"/>
        <end position="23"/>
    </location>
</feature>
<feature type="strand" evidence="15">
    <location>
        <begin position="24"/>
        <end position="26"/>
    </location>
</feature>
<feature type="helix" evidence="15">
    <location>
        <begin position="36"/>
        <end position="61"/>
    </location>
</feature>
<feature type="helix" evidence="15">
    <location>
        <begin position="84"/>
        <end position="96"/>
    </location>
</feature>
<feature type="helix" evidence="15">
    <location>
        <begin position="98"/>
        <end position="113"/>
    </location>
</feature>
<feature type="helix" evidence="15">
    <location>
        <begin position="119"/>
        <end position="125"/>
    </location>
</feature>
<feature type="helix" evidence="15">
    <location>
        <begin position="127"/>
        <end position="146"/>
    </location>
</feature>
<feature type="helix" evidence="15">
    <location>
        <begin position="151"/>
        <end position="162"/>
    </location>
</feature>
<feature type="helix" evidence="15">
    <location>
        <begin position="166"/>
        <end position="193"/>
    </location>
</feature>
<feature type="strand" evidence="15">
    <location>
        <begin position="203"/>
        <end position="207"/>
    </location>
</feature>
<feature type="strand" evidence="15">
    <location>
        <begin position="257"/>
        <end position="259"/>
    </location>
</feature>
<feature type="helix" evidence="15">
    <location>
        <begin position="261"/>
        <end position="263"/>
    </location>
</feature>
<feature type="helix" evidence="15">
    <location>
        <begin position="270"/>
        <end position="284"/>
    </location>
</feature>
<feature type="helix" evidence="15">
    <location>
        <begin position="303"/>
        <end position="315"/>
    </location>
</feature>
<feature type="helix" evidence="15">
    <location>
        <begin position="322"/>
        <end position="347"/>
    </location>
</feature>
<feature type="helix" evidence="15">
    <location>
        <begin position="350"/>
        <end position="360"/>
    </location>
</feature>
<feature type="helix" evidence="15">
    <location>
        <begin position="366"/>
        <end position="380"/>
    </location>
</feature>
<feature type="helix" evidence="15">
    <location>
        <begin position="388"/>
        <end position="402"/>
    </location>
</feature>
<feature type="helix" evidence="15">
    <location>
        <begin position="411"/>
        <end position="413"/>
    </location>
</feature>
<feature type="strand" evidence="15">
    <location>
        <begin position="414"/>
        <end position="418"/>
    </location>
</feature>
<feature type="turn" evidence="15">
    <location>
        <begin position="449"/>
        <end position="452"/>
    </location>
</feature>
<feature type="strand" evidence="15">
    <location>
        <begin position="453"/>
        <end position="457"/>
    </location>
</feature>
<feature type="helix" evidence="15">
    <location>
        <begin position="463"/>
        <end position="465"/>
    </location>
</feature>
<feature type="helix" evidence="15">
    <location>
        <begin position="469"/>
        <end position="499"/>
    </location>
</feature>
<feature type="helix" evidence="15">
    <location>
        <begin position="502"/>
        <end position="504"/>
    </location>
</feature>
<feature type="helix" evidence="15">
    <location>
        <begin position="509"/>
        <end position="535"/>
    </location>
</feature>
<feature type="helix" evidence="15">
    <location>
        <begin position="537"/>
        <end position="549"/>
    </location>
</feature>
<feature type="helix" evidence="15">
    <location>
        <begin position="554"/>
        <end position="574"/>
    </location>
</feature>
<feature type="helix" evidence="15">
    <location>
        <begin position="576"/>
        <end position="597"/>
    </location>
</feature>
<feature type="helix" evidence="15">
    <location>
        <begin position="606"/>
        <end position="635"/>
    </location>
</feature>
<feature type="helix" evidence="15">
    <location>
        <begin position="640"/>
        <end position="654"/>
    </location>
</feature>
<comment type="function">
    <text evidence="5 6 7">Component of the gamma-tubulin ring complex (gTuRC) which mediates microtubule nucleation (PubMed:38305685, PubMed:38609661, PubMed:39321809). The gTuRC regulates the minus-end nucleation of alpha-beta tubulin heterodimers that grow into microtubule protafilaments, a critical step in centrosome duplication and spindle formation (PubMed:38305685, PubMed:38609661, PubMed:39321809).</text>
</comment>
<comment type="subunit">
    <text evidence="2 4 5 6 7">Component of the gamma-tubulin ring complex (gTuRC) consisting of TUBGCP2, TUBGCP3, TUBGCP4, TUBGCP5 and TUBGCP6 and gamma-tubulin TUBG1 or TUBG2 (PubMed:39321809, PubMed:38609661, PubMed:38305685). TUBGCP2, TUBGCP3, TUBGCP4, TUBGCP5 and TUBGCP6 assemble in a 5:5:2:1:1 stoichiometry; each is associated with a gamma-tubulin, thereby arranging 14 gamma-tubulins in a helical manner (PubMed:39321809, PubMed:38609661, PubMed:38305685). Gamma-tubulin at the first position is blocked by TUBGCP3 at the last position, allowing 13 protafilaments to grow into a microtubule (PubMed:39321809, PubMed:38609661, PubMed:38305685). The gTuRC (via TUBGCP3 and TUBGCP6) interacts with ACTB and MZT1; the interactions form a luminal bridge that stabilizes the initial structure during complex assembly (PubMed:39321809, PubMed:38609661). The gTuRC (via TUBGCP2) interacts with MZT2A/MZT2B and CDK5RAP2 (via CM1 motif); the interactions play a role in gTuRC activation (PubMed:39321809). Interacts with NINL (PubMed:12852856). Interacts with ATF5; the ATF5:PCNT:polyglutamylated tubulin (PGT) tripartite unites the mother centriole and the pericentriolar material (PCM) in the centrosome (PubMed:26213385).</text>
</comment>
<comment type="interaction">
    <interactant intactId="EBI-1052544">
        <id>Q9UGJ1</id>
    </interactant>
    <interactant intactId="EBI-748515">
        <id>Q8IVS8</id>
        <label>GLYCTK</label>
    </interactant>
    <organismsDiffer>false</organismsDiffer>
    <experiments>3</experiments>
</comment>
<comment type="interaction">
    <interactant intactId="EBI-1052544">
        <id>Q9UGJ1</id>
    </interactant>
    <interactant intactId="EBI-2350056">
        <id>Q8N653</id>
        <label>LZTR1</label>
    </interactant>
    <organismsDiffer>false</organismsDiffer>
    <experiments>4</experiments>
</comment>
<comment type="interaction">
    <interactant intactId="EBI-1052544">
        <id>Q9UGJ1</id>
    </interactant>
    <interactant intactId="EBI-722397">
        <id>Q9NTX7</id>
        <label>RNF146</label>
    </interactant>
    <organismsDiffer>false</organismsDiffer>
    <experiments>3</experiments>
</comment>
<comment type="interaction">
    <interactant intactId="EBI-10964469">
        <id>Q9UGJ1-2</id>
    </interactant>
    <interactant intactId="EBI-355710">
        <id>P48643</id>
        <label>CCT5</label>
    </interactant>
    <organismsDiffer>false</organismsDiffer>
    <experiments>3</experiments>
</comment>
<comment type="interaction">
    <interactant intactId="EBI-10964469">
        <id>Q9UGJ1-2</id>
    </interactant>
    <interactant intactId="EBI-10297077">
        <id>Q9BRP7</id>
        <label>FDXACB1</label>
    </interactant>
    <organismsDiffer>false</organismsDiffer>
    <experiments>3</experiments>
</comment>
<comment type="interaction">
    <interactant intactId="EBI-10964469">
        <id>Q9UGJ1-2</id>
    </interactant>
    <interactant intactId="EBI-348399">
        <id>P22607</id>
        <label>FGFR3</label>
    </interactant>
    <organismsDiffer>false</organismsDiffer>
    <experiments>3</experiments>
</comment>
<comment type="interaction">
    <interactant intactId="EBI-10964469">
        <id>Q9UGJ1-2</id>
    </interactant>
    <interactant intactId="EBI-350145">
        <id>P01112</id>
        <label>HRAS</label>
    </interactant>
    <organismsDiffer>false</organismsDiffer>
    <experiments>3</experiments>
</comment>
<comment type="interaction">
    <interactant intactId="EBI-10964469">
        <id>Q9UGJ1-2</id>
    </interactant>
    <interactant intactId="EBI-466029">
        <id>P42858</id>
        <label>HTT</label>
    </interactant>
    <organismsDiffer>false</organismsDiffer>
    <experiments>6</experiments>
</comment>
<comment type="interaction">
    <interactant intactId="EBI-10964469">
        <id>Q9UGJ1-2</id>
    </interactant>
    <interactant intactId="EBI-10975473">
        <id>O60333-2</id>
        <label>KIF1B</label>
    </interactant>
    <organismsDiffer>false</organismsDiffer>
    <experiments>3</experiments>
</comment>
<comment type="interaction">
    <interactant intactId="EBI-10964469">
        <id>Q9UGJ1-2</id>
    </interactant>
    <interactant intactId="EBI-2371606">
        <id>P19013</id>
        <label>KRT4</label>
    </interactant>
    <organismsDiffer>false</organismsDiffer>
    <experiments>3</experiments>
</comment>
<comment type="interaction">
    <interactant intactId="EBI-10964469">
        <id>Q9UGJ1-2</id>
    </interactant>
    <interactant intactId="EBI-740907">
        <id>P04259</id>
        <label>KRT6B</label>
    </interactant>
    <organismsDiffer>false</organismsDiffer>
    <experiments>3</experiments>
</comment>
<comment type="interaction">
    <interactant intactId="EBI-10964469">
        <id>Q9UGJ1-2</id>
    </interactant>
    <interactant intactId="EBI-475646">
        <id>P07196</id>
        <label>NEFL</label>
    </interactant>
    <organismsDiffer>false</organismsDiffer>
    <experiments>3</experiments>
</comment>
<comment type="interaction">
    <interactant intactId="EBI-10964469">
        <id>Q9UGJ1-2</id>
    </interactant>
    <interactant intactId="EBI-11135904">
        <id>P46020-2</id>
        <label>PHKA1</label>
    </interactant>
    <organismsDiffer>false</organismsDiffer>
    <experiments>3</experiments>
</comment>
<comment type="interaction">
    <interactant intactId="EBI-10964469">
        <id>Q9UGJ1-2</id>
    </interactant>
    <interactant intactId="EBI-752074">
        <id>P41219</id>
        <label>PRPH</label>
    </interactant>
    <organismsDiffer>false</organismsDiffer>
    <experiments>3</experiments>
</comment>
<comment type="interaction">
    <interactant intactId="EBI-10964469">
        <id>Q9UGJ1-2</id>
    </interactant>
    <interactant intactId="EBI-396669">
        <id>Q9Y3C5</id>
        <label>RNF11</label>
    </interactant>
    <organismsDiffer>false</organismsDiffer>
    <experiments>3</experiments>
</comment>
<comment type="interaction">
    <interactant intactId="EBI-10964469">
        <id>Q9UGJ1-2</id>
    </interactant>
    <interactant intactId="EBI-302589">
        <id>P23258</id>
        <label>TUBG1</label>
    </interactant>
    <organismsDiffer>false</organismsDiffer>
    <experiments>2</experiments>
</comment>
<comment type="interaction">
    <interactant intactId="EBI-10964469">
        <id>Q9UGJ1-2</id>
    </interactant>
    <interactant intactId="EBI-741480">
        <id>Q9UMX0</id>
        <label>UBQLN1</label>
    </interactant>
    <organismsDiffer>false</organismsDiffer>
    <experiments>3</experiments>
</comment>
<comment type="interaction">
    <interactant intactId="EBI-10964469">
        <id>Q9UGJ1-2</id>
    </interactant>
    <interactant intactId="EBI-720609">
        <id>O76024</id>
        <label>WFS1</label>
    </interactant>
    <organismsDiffer>false</organismsDiffer>
    <experiments>3</experiments>
</comment>
<comment type="interaction">
    <interactant intactId="EBI-10964469">
        <id>Q9UGJ1-2</id>
    </interactant>
    <interactant intactId="EBI-25900580">
        <id>Q9Y649</id>
    </interactant>
    <organismsDiffer>false</organismsDiffer>
    <experiments>3</experiments>
</comment>
<comment type="subcellular location">
    <subcellularLocation>
        <location>Cytoplasm</location>
        <location>Cytoskeleton</location>
        <location>Microtubule organizing center</location>
        <location>Centrosome</location>
    </subcellularLocation>
</comment>
<comment type="alternative products">
    <event type="alternative splicing"/>
    <isoform>
        <id>Q9UGJ1-1</id>
        <name>1</name>
        <sequence type="displayed"/>
    </isoform>
    <isoform>
        <id>Q9UGJ1-2</id>
        <name>2</name>
        <sequence type="described" ref="VSP_040085"/>
    </isoform>
</comment>
<comment type="tissue specificity">
    <text>Ubiquitously expressed.</text>
</comment>
<comment type="disease" evidence="3">
    <disease id="DI-04411">
        <name>Microcephaly and chorioretinopathy, autosomal recessive, 3</name>
        <acronym>MCCRP3</acronym>
        <description>A disorder characterized by congenital microcephaly and chorioretinal dysplasia associated with poor vision and nystagmus. Variable ocular anomalies include microphthalmia, retinal folding, retinal detachment, optic nerve hypoplasia, absence of retinal vessels, round areas of chorioretinal atrophy, and attenuated electroretinogram. Most patients have mild developmental delay and mild learning difficulties.</description>
        <dbReference type="MIM" id="616335"/>
    </disease>
    <text>The disease is caused by variants affecting the gene represented in this entry.</text>
</comment>
<comment type="similarity">
    <text evidence="9">Belongs to the TUBGCP family.</text>
</comment>
<comment type="sequence caution" evidence="9">
    <conflict type="erroneous initiation">
        <sequence resource="EMBL-CDS" id="BAA91802"/>
    </conflict>
    <text>Truncated N-terminus.</text>
</comment>
<gene>
    <name type="primary">TUBGCP4</name>
    <name type="synonym">76P</name>
    <name type="synonym">GCP4</name>
</gene>
<accession>Q9UGJ1</accession>
<accession>B3KNK6</accession>
<accession>Q969X3</accession>
<accession>Q9NVF0</accession>
<protein>
    <recommendedName>
        <fullName>Gamma-tubulin complex component 4</fullName>
        <shortName>GCP-4</shortName>
        <shortName>hGCP4</shortName>
    </recommendedName>
    <alternativeName>
        <fullName>Gamma-ring complex protein 76 kDa</fullName>
        <shortName>h76p</shortName>
        <shortName>hGrip76</shortName>
    </alternativeName>
</protein>
<proteinExistence type="evidence at protein level"/>